<evidence type="ECO:0000250" key="1"/>
<evidence type="ECO:0000250" key="2">
    <source>
        <dbReference type="UniProtKB" id="O89051"/>
    </source>
</evidence>
<evidence type="ECO:0000255" key="3"/>
<evidence type="ECO:0000255" key="4">
    <source>
        <dbReference type="PROSITE-ProRule" id="PRU00255"/>
    </source>
</evidence>
<evidence type="ECO:0000269" key="5">
    <source>
    </source>
</evidence>
<evidence type="ECO:0000269" key="6">
    <source>
    </source>
</evidence>
<evidence type="ECO:0000269" key="7">
    <source>
    </source>
</evidence>
<evidence type="ECO:0000269" key="8">
    <source>
    </source>
</evidence>
<evidence type="ECO:0000269" key="9">
    <source>
    </source>
</evidence>
<evidence type="ECO:0000269" key="10">
    <source>
    </source>
</evidence>
<evidence type="ECO:0000269" key="11">
    <source>
    </source>
</evidence>
<evidence type="ECO:0000269" key="12">
    <source>
    </source>
</evidence>
<evidence type="ECO:0000269" key="13">
    <source>
    </source>
</evidence>
<evidence type="ECO:0000269" key="14">
    <source>
    </source>
</evidence>
<evidence type="ECO:0000269" key="15">
    <source>
    </source>
</evidence>
<evidence type="ECO:0000269" key="16">
    <source>
    </source>
</evidence>
<evidence type="ECO:0000269" key="17">
    <source>
    </source>
</evidence>
<evidence type="ECO:0000269" key="18">
    <source>
    </source>
</evidence>
<evidence type="ECO:0000269" key="19">
    <source>
    </source>
</evidence>
<evidence type="ECO:0000269" key="20">
    <source>
    </source>
</evidence>
<evidence type="ECO:0000269" key="21">
    <source>
    </source>
</evidence>
<evidence type="ECO:0000269" key="22">
    <source>
    </source>
</evidence>
<evidence type="ECO:0000269" key="23">
    <source ref="5"/>
</evidence>
<evidence type="ECO:0000305" key="24"/>
<evidence type="ECO:0007829" key="25">
    <source>
        <dbReference type="PDB" id="8RNU"/>
    </source>
</evidence>
<comment type="function">
    <text>Plays a regulatory role in the processing of the amyloid-beta A4 precursor protein (APP) and acts as an inhibitor of the amyloid-beta peptide aggregation and fibrils deposition. Plays a role in the induction of neurite outgrowth. Functions as a protease inhibitor by blocking access of secretases to APP cleavage sites.</text>
</comment>
<comment type="function">
    <text>Mature BRI2 (mBRI2) functions as a modulator of the amyloid-beta A4 precursor protein (APP) processing leading to a strong reduction in the secretion of secretase-processed amyloid-beta protein 40 and amyloid-beta protein 42.</text>
</comment>
<comment type="function">
    <text>Bri23 peptide prevents aggregation of APP amyloid-beta protein 42 into toxic oligomers.</text>
</comment>
<comment type="subunit">
    <text evidence="2 10 11 13 14 17 18 20">Homodimer; disulfide-linked. Interacts with SPPL2A and SPPL2B. Interacts with APP. Mature BRI2 (mBRI2) interacts with the APP amyloid-beta A4 protein; the interaction occurs at the cell surface and in the endocytic compartments and enable alpha- and beta-secretase-induced APP cleavage inhibition. Mature BRI2 (mBRI2) interacts with the APP C99; the interaction occurs in the endocytic compartments and enable gamma-secretase-induced C99 cleavage inhibition. May form heterodimers with Bri23 peptide and APP amyloid-beta protein 40. Interacts with ADAM7 in sperm; the interaction increases following capacitation (By similarity).</text>
</comment>
<comment type="interaction">
    <interactant intactId="EBI-2866431">
        <id>Q9Y287</id>
    </interactant>
    <interactant intactId="EBI-79306">
        <id>Q06481</id>
        <label>APLP2</label>
    </interactant>
    <organismsDiffer>false</organismsDiffer>
    <experiments>2</experiments>
</comment>
<comment type="interaction">
    <interactant intactId="EBI-2866431">
        <id>Q9Y287</id>
    </interactant>
    <interactant intactId="EBI-77613">
        <id>P05067</id>
        <label>APP</label>
    </interactant>
    <organismsDiffer>false</organismsDiffer>
    <experiments>6</experiments>
</comment>
<comment type="interaction">
    <interactant intactId="EBI-2866431">
        <id>Q9Y287</id>
    </interactant>
    <interactant intactId="EBI-302661">
        <id>P05067-8</id>
        <label>APP</label>
    </interactant>
    <organismsDiffer>false</organismsDiffer>
    <experiments>4</experiments>
</comment>
<comment type="interaction">
    <interactant intactId="EBI-2866431">
        <id>Q9Y287</id>
    </interactant>
    <interactant intactId="EBI-2433139">
        <id>P56817</id>
        <label>BACE1</label>
    </interactant>
    <organismsDiffer>false</organismsDiffer>
    <experiments>4</experiments>
</comment>
<comment type="interaction">
    <interactant intactId="EBI-2866431">
        <id>Q9Y287</id>
    </interactant>
    <interactant intactId="EBI-1053725">
        <id>P10606</id>
        <label>COX5B</label>
    </interactant>
    <organismsDiffer>false</organismsDiffer>
    <experiments>3</experiments>
</comment>
<comment type="interaction">
    <interactant intactId="EBI-2866431">
        <id>Q9Y287</id>
    </interactant>
    <interactant intactId="EBI-749265">
        <id>Q8N6L0</id>
        <label>KASH5</label>
    </interactant>
    <organismsDiffer>false</organismsDiffer>
    <experiments>3</experiments>
</comment>
<comment type="interaction">
    <interactant intactId="EBI-2866431">
        <id>Q9Y287</id>
    </interactant>
    <interactant intactId="EBI-9018187">
        <id>P26715</id>
        <label>KLRC1</label>
    </interactant>
    <organismsDiffer>false</organismsDiffer>
    <experiments>3</experiments>
</comment>
<comment type="interaction">
    <interactant intactId="EBI-2866431">
        <id>Q9Y287</id>
    </interactant>
    <interactant intactId="EBI-10178964">
        <id>Q58DX5</id>
        <label>NAALADL2</label>
    </interactant>
    <organismsDiffer>false</organismsDiffer>
    <experiments>3</experiments>
</comment>
<comment type="interaction">
    <interactant intactId="EBI-2866431">
        <id>Q9Y287</id>
    </interactant>
    <interactant intactId="EBI-4287022">
        <id>Q96E17</id>
        <label>RAB3C</label>
    </interactant>
    <organismsDiffer>false</organismsDiffer>
    <experiments>3</experiments>
</comment>
<comment type="interaction">
    <interactant intactId="EBI-2866431">
        <id>Q9Y287</id>
    </interactant>
    <interactant intactId="EBI-25396304">
        <id>Q9NRM0-1</id>
        <label>SLC2A9</label>
    </interactant>
    <organismsDiffer>false</organismsDiffer>
    <experiments>4</experiments>
</comment>
<comment type="interaction">
    <interactant intactId="EBI-2866431">
        <id>Q9Y287</id>
    </interactant>
    <interactant intactId="EBI-25396386">
        <id>Q9NRM0-2</id>
        <label>SLC2A9</label>
    </interactant>
    <organismsDiffer>false</organismsDiffer>
    <experiments>2</experiments>
</comment>
<comment type="interaction">
    <interactant intactId="EBI-2866431">
        <id>Q9Y287</id>
    </interactant>
    <interactant intactId="EBI-7131783">
        <id>Q8N205</id>
        <label>SYNE4</label>
    </interactant>
    <organismsDiffer>false</organismsDiffer>
    <experiments>3</experiments>
</comment>
<comment type="interaction">
    <interactant intactId="EBI-2866431">
        <id>Q9Y287</id>
    </interactant>
    <interactant intactId="EBI-21513659">
        <id>Q9UK28</id>
        <label>TMEM59L</label>
    </interactant>
    <organismsDiffer>false</organismsDiffer>
    <experiments>3</experiments>
</comment>
<comment type="subcellular location">
    <molecule>Integral membrane protein 2B</molecule>
    <subcellularLocation>
        <location evidence="8 16">Golgi apparatus membrane</location>
        <topology evidence="6">Single-pass type II membrane protein</topology>
    </subcellularLocation>
    <text>Immature BRI2 (imBRI2) is cleaved by furin in the Golgi into mBRI2 and a Bri23 peptide. mBRI2 is transported to the plasma membrane and Bri23 peptide is secreted.</text>
</comment>
<comment type="subcellular location">
    <molecule>BRI2, membrane form</molecule>
    <subcellularLocation>
        <location evidence="14 17 19">Cell membrane</location>
        <topology evidence="6">Single-pass type II membrane protein</topology>
    </subcellularLocation>
    <subcellularLocation>
        <location evidence="17">Endosome membrane</location>
        <topology evidence="6">Single-pass type II membrane protein</topology>
    </subcellularLocation>
    <text evidence="17">Mature BRI2 (mBRI2) needs to be transported from the endoplasmic reticulum compartment to the cell membrane in order to be able to inhibit APP processing.</text>
</comment>
<comment type="subcellular location">
    <molecule>Bri23 peptide</molecule>
    <subcellularLocation>
        <location evidence="6 8 15">Secreted</location>
    </subcellularLocation>
    <text evidence="15">Detected in the cerebral spinal fluid (CSF).</text>
</comment>
<comment type="subcellular location">
    <molecule>BRI2C, soluble form</molecule>
    <subcellularLocation>
        <location evidence="13">Secreted</location>
    </subcellularLocation>
</comment>
<comment type="alternative products">
    <event type="alternative splicing"/>
    <isoform>
        <id>Q9Y287-1</id>
        <name>1</name>
        <sequence type="displayed"/>
    </isoform>
    <isoform>
        <id>Q9Y287-2</id>
        <name>2</name>
        <sequence type="described" ref="VSP_055326"/>
    </isoform>
</comment>
<comment type="tissue specificity">
    <text>Ubiquitous. Expressed in brain.</text>
</comment>
<comment type="PTM">
    <text>The ectodomain C-terminal part of the imBRI2 is processed by furin producing a secreted Bri23 peptide and a mature BRI2, membrane form (mBRI2). The remaining part of the ectodomain of mBRI2 containing the BRICHOS domain is cleaved by ADAM10 and is secreted (BRI2C, soluble form). The membrane-bound N-terminal fragment (BRI2C, membrane form) is further proteolytically processed by SPPL2A and SPPL2B through regulated intramembrane proteolysis producing a secreted C-peptide and a BRI2 intracellular domain (BRI2 ICD) released in the cytosol. Shedding by ADAM10 facilitates intramembrane cleavage but is not absolutely required for BRI2 ICD generation.</text>
</comment>
<comment type="PTM">
    <text evidence="19">Glycosylation at Asn-170 is important for cell surface localization, but doesn't affect furin- and ADAM10-induced proteolytic processing.</text>
</comment>
<comment type="disease" evidence="5 6 8">
    <disease id="DI-02619">
        <name>Cerebral amyloid angiopathy, ITM2B-related 1</name>
        <acronym>CAA-ITM2B1</acronym>
        <description>A disorder characterized by amyloid deposition in the walls of cerebral blood vessels and neurodegeneration in the central nervous system. Cerebral amyloid angiopathy, non-neuritic and perivascular plaques and neurofibrillary tangles are the predominant pathological lesions. Clinical features include progressive mental deterioration, spasticity and muscular rigidity.</description>
        <dbReference type="MIM" id="176500"/>
    </disease>
    <text evidence="5 6">The disease is caused by variants affecting the gene represented in this entry. A single base substitution at the stop codon of ITM2B generates a 277-residue precursor that is cleaved at the normal furin processing site to generate the ABri amyloidogenic peptide (PubMed:10391242). ABri accumulates in the brain and produces amyloid fibrils responsible for neuronal dysfunction and dementia. ABri peptide variant forms fibrils in vitro (PubMed:10526337).</text>
</comment>
<comment type="disease" evidence="7 8 12">
    <disease id="DI-02617">
        <name>Cerebral amyloid angiopathy, ITM2B-related 2</name>
        <acronym>CAA-ITM2B2</acronym>
        <description>A disorder characterized by amyloid deposition in the walls of the blood vessels of the cerebrum, choroid plexus, cerebellum, spinal cord and retina. Plaques and neurofibrillary tangles are observed in the hippocampus. Clinical features include progressive ataxia, dementia, cataracts and deafness.</description>
        <dbReference type="MIM" id="117300"/>
    </disease>
    <text evidence="7">The disease is caused by variants affecting the gene represented in this entry. A decamer duplication in the 3' region of ITM2B results in the production of the ADan amyloidogenic peptide (PubMed:10781099). ADan is generated by cleavage of the mutated precursor at the normal furin processing site. ADan accumulates in the brain and produces amyloid fibrils responsible for neuronal dysfunction and dementia.</text>
</comment>
<comment type="disease" evidence="22">
    <disease id="DI-04272">
        <name>Retinal dystrophy with inner retinal dysfunction and ganglion cell abnormalities</name>
        <acronym>RDGCA</acronym>
        <description>An autosomal dominant retinal dystrophy characterized by inner retinal dysfunction in association with ganglion cell abnormalities. Clinical features include mild photophobia, progressive loss of central vision, night blindness, and hyperreflectivity of nerve and ganglion cell layers.</description>
        <dbReference type="MIM" id="616079"/>
    </disease>
    <text>The disease is caused by variants affecting the gene represented in this entry.</text>
</comment>
<comment type="similarity">
    <text evidence="24">Belongs to the ITM2 family.</text>
</comment>
<accession>Q9Y287</accession>
<accession>Q5W0A3</accession>
<accession>Q96B24</accession>
<accession>Q9NYH1</accession>
<protein>
    <recommendedName>
        <fullName>Integral membrane protein 2B</fullName>
    </recommendedName>
    <alternativeName>
        <fullName>Immature BRI2</fullName>
        <shortName>imBRI2</shortName>
    </alternativeName>
    <alternativeName>
        <fullName>Protein E25B</fullName>
    </alternativeName>
    <alternativeName>
        <fullName>Transmembrane protein BRI</fullName>
        <shortName>Bri</shortName>
    </alternativeName>
    <component>
        <recommendedName>
            <fullName>BRI2, membrane form</fullName>
        </recommendedName>
        <alternativeName>
            <fullName>Mature BRI2</fullName>
            <shortName>mBRI2</shortName>
        </alternativeName>
    </component>
    <component>
        <recommendedName>
            <fullName>BRI2 intracellular domain</fullName>
            <shortName>BRI2 ICD</shortName>
        </recommendedName>
    </component>
    <component>
        <recommendedName>
            <fullName>BRI2C, soluble form</fullName>
        </recommendedName>
    </component>
    <component>
        <recommendedName>
            <fullName>Bri23 peptide</fullName>
            <shortName>Bri2-23</shortName>
        </recommendedName>
        <alternativeName>
            <fullName>ABri23</fullName>
        </alternativeName>
        <alternativeName>
            <fullName>C-terminal peptide</fullName>
        </alternativeName>
        <alternativeName>
            <fullName>P23 peptide</fullName>
        </alternativeName>
    </component>
</protein>
<proteinExistence type="evidence at protein level"/>
<dbReference type="EMBL" id="AF152462">
    <property type="protein sequence ID" value="AAD45280.1"/>
    <property type="molecule type" value="mRNA"/>
</dbReference>
<dbReference type="EMBL" id="AF246221">
    <property type="protein sequence ID" value="AAF66130.1"/>
    <property type="molecule type" value="mRNA"/>
</dbReference>
<dbReference type="EMBL" id="AF136973">
    <property type="protein sequence ID" value="AAG49434.1"/>
    <property type="molecule type" value="mRNA"/>
</dbReference>
<dbReference type="EMBL" id="AF092128">
    <property type="protein sequence ID" value="AAD40370.1"/>
    <property type="molecule type" value="mRNA"/>
</dbReference>
<dbReference type="EMBL" id="BT006863">
    <property type="protein sequence ID" value="AAP35509.1"/>
    <property type="molecule type" value="mRNA"/>
</dbReference>
<dbReference type="EMBL" id="AY341247">
    <property type="protein sequence ID" value="AAP88930.1"/>
    <property type="molecule type" value="Genomic_DNA"/>
</dbReference>
<dbReference type="EMBL" id="CH471075">
    <property type="protein sequence ID" value="EAX08789.1"/>
    <property type="molecule type" value="Genomic_DNA"/>
</dbReference>
<dbReference type="EMBL" id="CH471075">
    <property type="protein sequence ID" value="EAX08790.1"/>
    <property type="molecule type" value="Genomic_DNA"/>
</dbReference>
<dbReference type="EMBL" id="BC000554">
    <property type="protein sequence ID" value="AAH00554.1"/>
    <property type="molecule type" value="mRNA"/>
</dbReference>
<dbReference type="EMBL" id="BC016148">
    <property type="protein sequence ID" value="AAH16148.1"/>
    <property type="molecule type" value="mRNA"/>
</dbReference>
<dbReference type="CCDS" id="CCDS9409.1">
    <molecule id="Q9Y287-1"/>
</dbReference>
<dbReference type="RefSeq" id="NP_068839.1">
    <molecule id="Q9Y287-1"/>
    <property type="nucleotide sequence ID" value="NM_021999.5"/>
</dbReference>
<dbReference type="PDB" id="8RNU">
    <property type="method" value="EM"/>
    <property type="resolution" value="3.40 A"/>
    <property type="chains" value="A/B/C/D/E/F/G/H/I/J/K/L=113-231"/>
</dbReference>
<dbReference type="PDBsum" id="8RNU"/>
<dbReference type="EMDB" id="EMD-19395"/>
<dbReference type="EMDB" id="EMD-3918"/>
<dbReference type="SMR" id="Q9Y287"/>
<dbReference type="BioGRID" id="114835">
    <property type="interactions" value="139"/>
</dbReference>
<dbReference type="FunCoup" id="Q9Y287">
    <property type="interactions" value="1329"/>
</dbReference>
<dbReference type="IntAct" id="Q9Y287">
    <property type="interactions" value="533"/>
</dbReference>
<dbReference type="MINT" id="Q9Y287"/>
<dbReference type="STRING" id="9606.ENSP00000497221"/>
<dbReference type="TCDB" id="1.C.81.2.1">
    <property type="family name" value="the arenicin (arenicin) family"/>
</dbReference>
<dbReference type="GlyConnect" id="1403">
    <property type="glycosylation" value="2 N-Linked glycans (1 site)"/>
</dbReference>
<dbReference type="GlyCosmos" id="Q9Y287">
    <property type="glycosylation" value="1 site, 2 glycans"/>
</dbReference>
<dbReference type="GlyGen" id="Q9Y287">
    <property type="glycosylation" value="1 site, 15 N-linked glycans (1 site)"/>
</dbReference>
<dbReference type="iPTMnet" id="Q9Y287"/>
<dbReference type="PhosphoSitePlus" id="Q9Y287"/>
<dbReference type="SwissPalm" id="Q9Y287"/>
<dbReference type="BioMuta" id="ITM2B"/>
<dbReference type="DMDM" id="12643343"/>
<dbReference type="jPOST" id="Q9Y287"/>
<dbReference type="MassIVE" id="Q9Y287"/>
<dbReference type="PaxDb" id="9606-ENSP00000367828"/>
<dbReference type="PeptideAtlas" id="Q9Y287"/>
<dbReference type="ProteomicsDB" id="85699">
    <molecule id="Q9Y287-1"/>
</dbReference>
<dbReference type="Pumba" id="Q9Y287"/>
<dbReference type="TopDownProteomics" id="Q9Y287-1">
    <molecule id="Q9Y287-1"/>
</dbReference>
<dbReference type="Antibodypedia" id="23811">
    <property type="antibodies" value="255 antibodies from 30 providers"/>
</dbReference>
<dbReference type="DNASU" id="9445"/>
<dbReference type="Ensembl" id="ENST00000378549.5">
    <molecule id="Q9Y287-2"/>
    <property type="protein sequence ID" value="ENSP00000367811.5"/>
    <property type="gene ID" value="ENSG00000136156.15"/>
</dbReference>
<dbReference type="Ensembl" id="ENST00000647800.2">
    <molecule id="Q9Y287-1"/>
    <property type="protein sequence ID" value="ENSP00000497221.1"/>
    <property type="gene ID" value="ENSG00000136156.15"/>
</dbReference>
<dbReference type="GeneID" id="9445"/>
<dbReference type="KEGG" id="hsa:9445"/>
<dbReference type="MANE-Select" id="ENST00000647800.2">
    <property type="protein sequence ID" value="ENSP00000497221.1"/>
    <property type="RefSeq nucleotide sequence ID" value="NM_021999.5"/>
    <property type="RefSeq protein sequence ID" value="NP_068839.1"/>
</dbReference>
<dbReference type="UCSC" id="uc001vbz.4">
    <molecule id="Q9Y287-1"/>
    <property type="organism name" value="human"/>
</dbReference>
<dbReference type="AGR" id="HGNC:6174"/>
<dbReference type="CTD" id="9445"/>
<dbReference type="DisGeNET" id="9445"/>
<dbReference type="GeneCards" id="ITM2B"/>
<dbReference type="HGNC" id="HGNC:6174">
    <property type="gene designation" value="ITM2B"/>
</dbReference>
<dbReference type="HPA" id="ENSG00000136156">
    <property type="expression patterns" value="Low tissue specificity"/>
</dbReference>
<dbReference type="MalaCards" id="ITM2B"/>
<dbReference type="MIM" id="117300">
    <property type="type" value="phenotype"/>
</dbReference>
<dbReference type="MIM" id="176500">
    <property type="type" value="phenotype"/>
</dbReference>
<dbReference type="MIM" id="603904">
    <property type="type" value="gene"/>
</dbReference>
<dbReference type="MIM" id="616079">
    <property type="type" value="phenotype"/>
</dbReference>
<dbReference type="neXtProt" id="NX_Q9Y287"/>
<dbReference type="OpenTargets" id="ENSG00000136156"/>
<dbReference type="Orphanet" id="97345">
    <property type="disease" value="ABri amyloidosis"/>
</dbReference>
<dbReference type="Orphanet" id="97346">
    <property type="disease" value="ADan amyloidosis"/>
</dbReference>
<dbReference type="Orphanet" id="397758">
    <property type="disease" value="Retinal dystrophy with inner retinal dysfunction and ganglion cell anomalies"/>
</dbReference>
<dbReference type="PharmGKB" id="PA29971"/>
<dbReference type="VEuPathDB" id="HostDB:ENSG00000136156"/>
<dbReference type="eggNOG" id="KOG4681">
    <property type="taxonomic scope" value="Eukaryota"/>
</dbReference>
<dbReference type="GeneTree" id="ENSGT00950000183115"/>
<dbReference type="HOGENOM" id="CLU_074596_0_0_1"/>
<dbReference type="InParanoid" id="Q9Y287"/>
<dbReference type="OMA" id="YFAFQQD"/>
<dbReference type="OrthoDB" id="9982095at2759"/>
<dbReference type="PAN-GO" id="Q9Y287">
    <property type="GO annotations" value="4 GO annotations based on evolutionary models"/>
</dbReference>
<dbReference type="PhylomeDB" id="Q9Y287"/>
<dbReference type="TreeFam" id="TF317770"/>
<dbReference type="PathwayCommons" id="Q9Y287"/>
<dbReference type="Reactome" id="R-HSA-977225">
    <property type="pathway name" value="Amyloid fiber formation"/>
</dbReference>
<dbReference type="SignaLink" id="Q9Y287"/>
<dbReference type="BioGRID-ORCS" id="9445">
    <property type="hits" value="44 hits in 1162 CRISPR screens"/>
</dbReference>
<dbReference type="ChiTaRS" id="ITM2B">
    <property type="organism name" value="human"/>
</dbReference>
<dbReference type="GeneWiki" id="ITM2B"/>
<dbReference type="GenomeRNAi" id="9445"/>
<dbReference type="Pharos" id="Q9Y287">
    <property type="development level" value="Tbio"/>
</dbReference>
<dbReference type="PRO" id="PR:Q9Y287"/>
<dbReference type="Proteomes" id="UP000005640">
    <property type="component" value="Chromosome 13"/>
</dbReference>
<dbReference type="RNAct" id="Q9Y287">
    <property type="molecule type" value="protein"/>
</dbReference>
<dbReference type="Bgee" id="ENSG00000136156">
    <property type="expression patterns" value="Expressed in renal glomerulus and 206 other cell types or tissues"/>
</dbReference>
<dbReference type="ExpressionAtlas" id="Q9Y287">
    <property type="expression patterns" value="baseline and differential"/>
</dbReference>
<dbReference type="GO" id="GO:0010008">
    <property type="term" value="C:endosome membrane"/>
    <property type="evidence" value="ECO:0007669"/>
    <property type="project" value="UniProtKB-SubCell"/>
</dbReference>
<dbReference type="GO" id="GO:0070062">
    <property type="term" value="C:extracellular exosome"/>
    <property type="evidence" value="ECO:0007005"/>
    <property type="project" value="UniProtKB"/>
</dbReference>
<dbReference type="GO" id="GO:0005576">
    <property type="term" value="C:extracellular region"/>
    <property type="evidence" value="ECO:0000304"/>
    <property type="project" value="Reactome"/>
</dbReference>
<dbReference type="GO" id="GO:0005615">
    <property type="term" value="C:extracellular space"/>
    <property type="evidence" value="ECO:0000314"/>
    <property type="project" value="UniProtKB"/>
</dbReference>
<dbReference type="GO" id="GO:0005794">
    <property type="term" value="C:Golgi apparatus"/>
    <property type="evidence" value="ECO:0000314"/>
    <property type="project" value="HPA"/>
</dbReference>
<dbReference type="GO" id="GO:0000139">
    <property type="term" value="C:Golgi membrane"/>
    <property type="evidence" value="ECO:0007669"/>
    <property type="project" value="UniProtKB-SubCell"/>
</dbReference>
<dbReference type="GO" id="GO:0030660">
    <property type="term" value="C:Golgi-associated vesicle membrane"/>
    <property type="evidence" value="ECO:0000314"/>
    <property type="project" value="UniProtKB"/>
</dbReference>
<dbReference type="GO" id="GO:0043231">
    <property type="term" value="C:intracellular membrane-bounded organelle"/>
    <property type="evidence" value="ECO:0000314"/>
    <property type="project" value="HPA"/>
</dbReference>
<dbReference type="GO" id="GO:0016020">
    <property type="term" value="C:membrane"/>
    <property type="evidence" value="ECO:0007005"/>
    <property type="project" value="UniProtKB"/>
</dbReference>
<dbReference type="GO" id="GO:0031090">
    <property type="term" value="C:organelle membrane"/>
    <property type="evidence" value="ECO:0000314"/>
    <property type="project" value="UniProtKB"/>
</dbReference>
<dbReference type="GO" id="GO:0005886">
    <property type="term" value="C:plasma membrane"/>
    <property type="evidence" value="ECO:0000314"/>
    <property type="project" value="UniProtKB"/>
</dbReference>
<dbReference type="GO" id="GO:0001540">
    <property type="term" value="F:amyloid-beta binding"/>
    <property type="evidence" value="ECO:0000353"/>
    <property type="project" value="BHF-UCL"/>
</dbReference>
<dbReference type="GO" id="GO:0005524">
    <property type="term" value="F:ATP binding"/>
    <property type="evidence" value="ECO:0007669"/>
    <property type="project" value="Ensembl"/>
</dbReference>
<dbReference type="GO" id="GO:0042985">
    <property type="term" value="P:negative regulation of amyloid precursor protein biosynthetic process"/>
    <property type="evidence" value="ECO:0000314"/>
    <property type="project" value="UniProtKB"/>
</dbReference>
<dbReference type="GO" id="GO:0007399">
    <property type="term" value="P:nervous system development"/>
    <property type="evidence" value="ECO:0000304"/>
    <property type="project" value="ProtInc"/>
</dbReference>
<dbReference type="InterPro" id="IPR007084">
    <property type="entry name" value="BRICHOS_dom"/>
</dbReference>
<dbReference type="InterPro" id="IPR040145">
    <property type="entry name" value="ITM2"/>
</dbReference>
<dbReference type="PANTHER" id="PTHR10962:SF4">
    <property type="entry name" value="INTEGRAL MEMBRANE PROTEIN 2B"/>
    <property type="match status" value="1"/>
</dbReference>
<dbReference type="PANTHER" id="PTHR10962">
    <property type="entry name" value="INTEGRAL TRANSMEMBRANE PROTEIN 2"/>
    <property type="match status" value="1"/>
</dbReference>
<dbReference type="Pfam" id="PF04089">
    <property type="entry name" value="BRICHOS"/>
    <property type="match status" value="1"/>
</dbReference>
<dbReference type="SMART" id="SM01039">
    <property type="entry name" value="BRICHOS"/>
    <property type="match status" value="1"/>
</dbReference>
<dbReference type="PROSITE" id="PS50869">
    <property type="entry name" value="BRICHOS"/>
    <property type="match status" value="1"/>
</dbReference>
<organism>
    <name type="scientific">Homo sapiens</name>
    <name type="common">Human</name>
    <dbReference type="NCBI Taxonomy" id="9606"/>
    <lineage>
        <taxon>Eukaryota</taxon>
        <taxon>Metazoa</taxon>
        <taxon>Chordata</taxon>
        <taxon>Craniata</taxon>
        <taxon>Vertebrata</taxon>
        <taxon>Euteleostomi</taxon>
        <taxon>Mammalia</taxon>
        <taxon>Eutheria</taxon>
        <taxon>Euarchontoglires</taxon>
        <taxon>Primates</taxon>
        <taxon>Haplorrhini</taxon>
        <taxon>Catarrhini</taxon>
        <taxon>Hominidae</taxon>
        <taxon>Homo</taxon>
    </lineage>
</organism>
<sequence length="266" mass="30338">MVKVTFNSALAQKEAKKDEPKSGEEALIIPPDAVAVDCKDPDDVVPVGQRRAWCWCMCFGLAFMLAGVILGGAYLYKYFALQPDDVYYCGIKYIKDDVILNEPSADAPAALYQTIEENIKIFEEEEVEFISVPVPEFADSDPANIVHDFNKKLTAYLDLNLDKCYVIPLNTSIVMPPRNLLELLINIKAGTYLPQSYLIHEHMVITDRIENIDHLGFFIYRLCHDKETYKLQRRETIKGIQKREASNCFAIRHFENKFAVETLICS</sequence>
<gene>
    <name type="primary">ITM2B</name>
    <name type="synonym">BRI</name>
    <name type="synonym">BRI2</name>
</gene>
<reference key="1">
    <citation type="journal article" date="1999" name="Nature">
        <title>A stop-codon mutation in the BRI gene associated with familial British dementia.</title>
        <authorList>
            <person name="Vidal R."/>
            <person name="Frangione B."/>
            <person name="Rostagno A."/>
            <person name="Mead S."/>
            <person name="Revesz T."/>
            <person name="Plant G."/>
            <person name="Ghiso J."/>
        </authorList>
    </citation>
    <scope>NUCLEOTIDE SEQUENCE [MRNA]</scope>
    <scope>INVOLVEMENT IN CAA-ITM2B1</scope>
    <scope>VARIANT CAA-ITM2B1 ARG-THR-VAL-LYS-LYS-ASN-ILE-ILE-GLU-GLU-ASN-266 INS</scope>
    <source>
        <tissue>Pituitary</tissue>
    </source>
</reference>
<reference key="2">
    <citation type="journal article" date="2000" name="Proc. Natl. Acad. Sci. U.S.A.">
        <title>A decamer duplication in the 3' region of the BRI gene originates an amyloid peptide that is associated with dementia in a Danish kindred.</title>
        <authorList>
            <person name="Vidal R."/>
            <person name="Revesz T."/>
            <person name="Rostagno A."/>
            <person name="Kim E."/>
            <person name="Holton J.L."/>
            <person name="Bek T."/>
            <person name="Bojsen-Moeller M."/>
            <person name="Braendgaard H."/>
            <person name="Plant G."/>
            <person name="Ghiso J."/>
            <person name="Frangione B."/>
        </authorList>
    </citation>
    <scope>NUCLEOTIDE SEQUENCE [MRNA]</scope>
    <scope>INVOLVEMENT IN CAA-ITM2B2</scope>
    <scope>VARIANT CAA-ITM2B2 SER-266 DELINS PHE-ASN-LEU-PHE-LEU-ASN-SER-GLN-GLU-LYS-HIS-TYR</scope>
</reference>
<reference key="3">
    <citation type="submission" date="2001-01" db="EMBL/GenBank/DDBJ databases">
        <title>A novel gene expressed in human adrenal gland.</title>
        <authorList>
            <person name="Ren S."/>
            <person name="Shi J."/>
            <person name="Huang C."/>
            <person name="Jiang C."/>
            <person name="Li Y."/>
            <person name="Zhou J."/>
            <person name="Yu Y."/>
            <person name="Xu S."/>
            <person name="Wang Y."/>
            <person name="Fu G."/>
            <person name="Chen Z."/>
            <person name="Han Z."/>
        </authorList>
    </citation>
    <scope>NUCLEOTIDE SEQUENCE [MRNA]</scope>
    <source>
        <tissue>Adrenal gland</tissue>
    </source>
</reference>
<reference key="4">
    <citation type="journal article" date="2000" name="Proc. Natl. Acad. Sci. U.S.A.">
        <title>Gene expression profiling in the human hypothalamus-pituitary-adrenal axis and full-length cDNA cloning.</title>
        <authorList>
            <person name="Hu R.-M."/>
            <person name="Han Z.-G."/>
            <person name="Song H.-D."/>
            <person name="Peng Y.-D."/>
            <person name="Huang Q.-H."/>
            <person name="Ren S.-X."/>
            <person name="Gu Y.-J."/>
            <person name="Huang C.-H."/>
            <person name="Li Y.-B."/>
            <person name="Jiang C.-L."/>
            <person name="Fu G."/>
            <person name="Zhang Q.-H."/>
            <person name="Gu B.-W."/>
            <person name="Dai M."/>
            <person name="Mao Y.-F."/>
            <person name="Gao G.-F."/>
            <person name="Rong R."/>
            <person name="Ye M."/>
            <person name="Zhou J."/>
            <person name="Xu S.-H."/>
            <person name="Gu J."/>
            <person name="Shi J.-X."/>
            <person name="Jin W.-R."/>
            <person name="Zhang C.-K."/>
            <person name="Wu T.-M."/>
            <person name="Huang G.-Y."/>
            <person name="Chen Z."/>
            <person name="Chen M.-D."/>
            <person name="Chen J.-L."/>
        </authorList>
    </citation>
    <scope>NUCLEOTIDE SEQUENCE [LARGE SCALE MRNA]</scope>
    <source>
        <tissue>Pituitary</tissue>
    </source>
</reference>
<reference key="5">
    <citation type="submission" date="2003-05" db="EMBL/GenBank/DDBJ databases">
        <title>Cloning of human full-length CDSs in BD Creator(TM) system donor vector.</title>
        <authorList>
            <person name="Kalnine N."/>
            <person name="Chen X."/>
            <person name="Rolfs A."/>
            <person name="Halleck A."/>
            <person name="Hines L."/>
            <person name="Eisenstein S."/>
            <person name="Koundinya M."/>
            <person name="Raphael J."/>
            <person name="Moreira D."/>
            <person name="Kelley T."/>
            <person name="LaBaer J."/>
            <person name="Lin Y."/>
            <person name="Phelan M."/>
            <person name="Farmer A."/>
        </authorList>
    </citation>
    <scope>NUCLEOTIDE SEQUENCE [LARGE SCALE MRNA]</scope>
    <scope>VARIANT THR-15</scope>
</reference>
<reference key="6">
    <citation type="submission" date="2003-07" db="EMBL/GenBank/DDBJ databases">
        <authorList>
            <consortium name="NIEHS SNPs program"/>
        </authorList>
    </citation>
    <scope>NUCLEOTIDE SEQUENCE [GENOMIC DNA]</scope>
</reference>
<reference key="7">
    <citation type="submission" date="2005-07" db="EMBL/GenBank/DDBJ databases">
        <authorList>
            <person name="Mural R.J."/>
            <person name="Istrail S."/>
            <person name="Sutton G."/>
            <person name="Florea L."/>
            <person name="Halpern A.L."/>
            <person name="Mobarry C.M."/>
            <person name="Lippert R."/>
            <person name="Walenz B."/>
            <person name="Shatkay H."/>
            <person name="Dew I."/>
            <person name="Miller J.R."/>
            <person name="Flanigan M.J."/>
            <person name="Edwards N.J."/>
            <person name="Bolanos R."/>
            <person name="Fasulo D."/>
            <person name="Halldorsson B.V."/>
            <person name="Hannenhalli S."/>
            <person name="Turner R."/>
            <person name="Yooseph S."/>
            <person name="Lu F."/>
            <person name="Nusskern D.R."/>
            <person name="Shue B.C."/>
            <person name="Zheng X.H."/>
            <person name="Zhong F."/>
            <person name="Delcher A.L."/>
            <person name="Huson D.H."/>
            <person name="Kravitz S.A."/>
            <person name="Mouchard L."/>
            <person name="Reinert K."/>
            <person name="Remington K.A."/>
            <person name="Clark A.G."/>
            <person name="Waterman M.S."/>
            <person name="Eichler E.E."/>
            <person name="Adams M.D."/>
            <person name="Hunkapiller M.W."/>
            <person name="Myers E.W."/>
            <person name="Venter J.C."/>
        </authorList>
    </citation>
    <scope>NUCLEOTIDE SEQUENCE [LARGE SCALE GENOMIC DNA]</scope>
</reference>
<reference key="8">
    <citation type="journal article" date="2004" name="Genome Res.">
        <title>The status, quality, and expansion of the NIH full-length cDNA project: the Mammalian Gene Collection (MGC).</title>
        <authorList>
            <consortium name="The MGC Project Team"/>
        </authorList>
    </citation>
    <scope>NUCLEOTIDE SEQUENCE [LARGE SCALE MRNA]</scope>
    <scope>VARIANT THR-15</scope>
    <source>
        <tissue>Brain</tissue>
        <tissue>Uterus</tissue>
    </source>
</reference>
<reference key="9">
    <citation type="journal article" date="2014" name="Hum. Mol. Genet.">
        <title>The familial dementia gene revisited: a missense mutation revealed by whole-exome sequencing identifies ITM2B as a candidate gene underlying a novel autosomal dominant retinal dystrophy in a large family.</title>
        <authorList>
            <person name="Audo I."/>
            <person name="Bujakowska K."/>
            <person name="Orhan E."/>
            <person name="El Shamieh S."/>
            <person name="Sennlaub F."/>
            <person name="Guillonneau X."/>
            <person name="Antonio A."/>
            <person name="Michiels C."/>
            <person name="Lancelot M.E."/>
            <person name="Letexier M."/>
            <person name="Saraiva J.P."/>
            <person name="Nguyen H."/>
            <person name="Luu T.D."/>
            <person name="Leveillard T."/>
            <person name="Poch O."/>
            <person name="Dollfus H."/>
            <person name="Paques M."/>
            <person name="Goureau O."/>
            <person name="Mohand-Said S."/>
            <person name="Bhattacharya S.S."/>
            <person name="Sahel J.A."/>
            <person name="Zeitz C."/>
        </authorList>
    </citation>
    <scope>INVOLVEMENT IN RDGCA</scope>
    <scope>VARIANT RDGCA ALA-261</scope>
</reference>
<reference key="10">
    <citation type="journal article" date="1999" name="Nat. Neurosci.">
        <title>Furin mediates enhanced production of fibrillogenic ABri peptides in familial British dementia.</title>
        <authorList>
            <person name="Kim S.H."/>
            <person name="Wang R."/>
            <person name="Gordon D.J."/>
            <person name="Bass J."/>
            <person name="Steiner D.F."/>
            <person name="Lynn D.G."/>
            <person name="Thinakaran G."/>
            <person name="Meredith S.C."/>
            <person name="Sisodia S.S."/>
        </authorList>
    </citation>
    <scope>CHARACTERIZATION OF VARIANT CAA-ITM2B1 ARG-THR-VAL-LYS-LYS-ASN-ILE-ILE-GLU-GLU-ASN-266 INS</scope>
    <scope>TOPOLOGY</scope>
    <scope>CLEAVAGE BY FURIN</scope>
    <scope>SUBCELLULAR LOCATION</scope>
    <scope>IDENTIFICATION BY MASS SPECTROMETRY</scope>
</reference>
<reference key="11">
    <citation type="journal article" date="2004" name="FASEB J.">
        <title>Axonal transport of British and Danish amyloid peptides via secretory vesicles.</title>
        <authorList>
            <person name="Choi S.I."/>
            <person name="Vidal R."/>
            <person name="Frangione B."/>
            <person name="Levy E."/>
        </authorList>
    </citation>
    <scope>FUNCTION</scope>
    <scope>TOPOLOGY</scope>
    <scope>PROTEOLYTIC CLEAVAGE</scope>
    <scope>CHARACTERIZATION OF VARIANT CAA-ITM2B1 ARG-THR-VAL-LYS-LYS-ASN-ILE-ILE-GLU-GLU-ASN-266 INS</scope>
    <scope>CHARACTERIZATION OF VARIANT CAA-ITM2B2 SER-266 DELINS PHE-ASN-LEU-PHE-LEU-ASN-SER-GLN-GLU-LYS-HIS-TYR</scope>
    <scope>SUBCELLULAR LOCATION</scope>
</reference>
<reference key="12">
    <citation type="journal article" date="2005" name="J. Biol. Chem.">
        <title>The familial dementia BRI2 gene binds the Alzheimer gene amyloid-beta precursor protein and inhibits amyloid-beta production.</title>
        <authorList>
            <person name="Matsuda S."/>
            <person name="Giliberto L."/>
            <person name="Matsuda Y."/>
            <person name="Davies P."/>
            <person name="McGowan E."/>
            <person name="Pickford F."/>
            <person name="Ghiso J."/>
            <person name="Frangione B."/>
            <person name="D'Adamio L."/>
        </authorList>
    </citation>
    <scope>FUNCTION</scope>
    <scope>INTERACTION WITH APP</scope>
</reference>
<reference key="13">
    <citation type="journal article" date="2005" name="J. Biol. Chem.">
        <title>BRI2 interacts with amyloid precursor protein (APP) and regulates amyloid beta (Abeta) production.</title>
        <authorList>
            <person name="Fotinopoulou A."/>
            <person name="Tsachaki M."/>
            <person name="Vlavaki M."/>
            <person name="Poulopoulos A."/>
            <person name="Rostagno A."/>
            <person name="Frangione B."/>
            <person name="Ghiso J."/>
            <person name="Efthimiopoulos S."/>
        </authorList>
    </citation>
    <scope>FUNCTION</scope>
    <scope>INTERACTION WITH APP</scope>
</reference>
<reference key="14">
    <citation type="journal article" date="2005" name="J. Biol. Chem.">
        <title>Familial Danish dementia: co-existence of Danish and Alzheimer amyloid subunits (ADan AND A{beta}) in the absence of compact plaques.</title>
        <authorList>
            <person name="Tomidokoro Y."/>
            <person name="Lashley T."/>
            <person name="Rostagno A."/>
            <person name="Neubert T.A."/>
            <person name="Bojsen-Moller M."/>
            <person name="Braendgaard H."/>
            <person name="Plant G."/>
            <person name="Holton J."/>
            <person name="Frangione B."/>
            <person name="Revesz T."/>
            <person name="Ghiso J."/>
        </authorList>
    </citation>
    <scope>CHARACTERIZATION OF VARIANT CAA-ITM2B2 SER-266 DELINS PHE-ASN-LEU-PHE-LEU-ASN-SER-GLN-GLU-LYS-HIS-TYR</scope>
</reference>
<reference key="15">
    <citation type="journal article" date="2008" name="J. Biol. Chem.">
        <title>Regulated intramembrane proteolysis of Bri2 (Itm2b) by ADAM10 and SPPL2a/SPPL2b.</title>
        <authorList>
            <person name="Martin L."/>
            <person name="Fluhrer R."/>
            <person name="Reiss K."/>
            <person name="Kremmer E."/>
            <person name="Saftig P."/>
            <person name="Haass C."/>
        </authorList>
    </citation>
    <scope>SUBCELLULAR LOCATION</scope>
    <scope>TOPOLOGY</scope>
    <scope>CLEAVAGE BY ADAM10; FURIN; SPPL2A AND SPPL2B</scope>
    <scope>INTERACTION WITH SPPL2A AND SPPL2B</scope>
    <scope>MUTAGENESIS OF 243-ARG-GLU-244</scope>
</reference>
<reference key="16">
    <citation type="journal article" date="2008" name="J. Neurosci.">
        <title>BRI2 (ITM2b) inhibits Abeta deposition in vivo.</title>
        <authorList>
            <person name="Kim J."/>
            <person name="Miller V.M."/>
            <person name="Levites Y."/>
            <person name="West K.J."/>
            <person name="Zwizinski C.W."/>
            <person name="Moore B.D."/>
            <person name="Troendle F.J."/>
            <person name="Bann M."/>
            <person name="Verbeeck C."/>
            <person name="Price R.W."/>
            <person name="Smithson L."/>
            <person name="Sonoda L."/>
            <person name="Wagg K."/>
            <person name="Rangachari V."/>
            <person name="Zou F."/>
            <person name="Younkin S.G."/>
            <person name="Graff-Radford N."/>
            <person name="Dickson D."/>
            <person name="Rosenberry T."/>
            <person name="Golde T.E."/>
        </authorList>
    </citation>
    <scope>FUNCTION OF SECRETED BRI23 PEPTIDE</scope>
    <scope>SUBCELLULAR LOCATION</scope>
    <scope>IDENTIFICATION BY MASS SPECTROMETRY</scope>
</reference>
<reference key="17">
    <citation type="journal article" date="2008" name="J. Neurosci.">
        <title>BRI2 inhibits amyloid beta-peptide precursor protein processing by interfering with the docking of secretases to the substrate.</title>
        <authorList>
            <person name="Matsuda S."/>
            <person name="Giliberto L."/>
            <person name="Matsuda Y."/>
            <person name="McGowan E.M."/>
            <person name="D'Adamio L."/>
        </authorList>
    </citation>
    <scope>FUNCTION</scope>
</reference>
<reference key="18">
    <citation type="journal article" date="2009" name="J. Biol. Chem.">
        <title>Substrate requirements for SPPL2b-dependent regulated intramembrane proteolysis.</title>
        <authorList>
            <person name="Martin L."/>
            <person name="Fluhrer R."/>
            <person name="Haass C."/>
        </authorList>
    </citation>
    <scope>CLEAVAGE BY ADAM10; FURIN AND SPPL2B</scope>
    <scope>SUBCELLULAR LOCATION</scope>
</reference>
<reference key="19">
    <citation type="journal article" date="2010" name="Biochem. Biophys. Res. Commun.">
        <title>The extracellular domain of Bri2 (ITM2B) binds the ABri peptide (1-23) and amyloid beta-peptide (Abeta1-40): Implications for Bri2 effects on processing of amyloid precursor protein and Abeta aggregation.</title>
        <authorList>
            <person name="Peng S."/>
            <person name="Fitzen M."/>
            <person name="Jornvall H."/>
            <person name="Johansson J."/>
        </authorList>
    </citation>
    <scope>FUNCTION OF SECRETED BRI23 PEPTIDE</scope>
    <scope>SUBUNIT</scope>
    <scope>INTERACTION WITH APP AMYLOID-BETA PROTEIN 40</scope>
    <scope>DISULFIDE BOND</scope>
    <scope>IDENTIFICATION BY MASS SPECTROMETRY</scope>
</reference>
<reference key="20">
    <citation type="journal article" date="2010" name="Neurobiol. Aging">
        <title>BRI2 homodimerizes with the involvement of intermolecular disulfide bonds.</title>
        <authorList>
            <person name="Tsachaki M."/>
            <person name="Ghiso J."/>
            <person name="Rostagno A."/>
            <person name="Efthimiopoulos S."/>
        </authorList>
    </citation>
    <scope>SUBCELLULAR LOCATION</scope>
    <scope>SUBUNIT</scope>
    <scope>DISULFIDE BONDS</scope>
</reference>
<reference key="21">
    <citation type="journal article" date="2011" name="Glycobiology">
        <title>Glycosylation of BRI2 on asparagine 170 is involved in its trafficking to the cell surface but not in its processing by furin or ADAM10.</title>
        <authorList>
            <person name="Tsachaki M."/>
            <person name="Serlidaki D."/>
            <person name="Fetani A."/>
            <person name="Zarkou V."/>
            <person name="Rozani I."/>
            <person name="Ghiso J."/>
            <person name="Efthimiopoulos S."/>
        </authorList>
    </citation>
    <scope>CLEAVAGE BY ADAM10; FURIN AND SPPL2B</scope>
    <scope>GLYCOSYLATION AT ASN-170</scope>
    <scope>SUBCELLULAR LOCATION</scope>
    <scope>MUTAGENESIS OF ASN-170</scope>
</reference>
<reference key="22">
    <citation type="journal article" date="2011" name="Neurobiol. Aging">
        <title>Maturation of BRI2 generates a specific inhibitor that reduces APP processing at the plasma membrane and in endocytic vesicles.</title>
        <authorList>
            <person name="Matsuda S."/>
            <person name="Matsuda Y."/>
            <person name="Snapp E.L."/>
            <person name="D'Adamio L."/>
        </authorList>
    </citation>
    <scope>FUNCTION OF MBRI2 IN APP PROCESSING INHIBITION</scope>
    <scope>INTERACTION WITH APP AMYLOID-BETA A4 AND APP C99</scope>
    <scope>PROTEOLYTIC CLEAVAGE</scope>
    <scope>SUBCELLULAR LOCATION</scope>
    <scope>MUTAGENESIS OF 243-ARG-GLU-244</scope>
</reference>
<reference key="23">
    <citation type="journal article" date="2012" name="EMBO Mol. Med.">
        <title>beta- but not gamma-secretase proteolysis of APP causes synaptic and memory deficits in a mouse model of dementia.</title>
        <authorList>
            <person name="Tamayev R."/>
            <person name="Matsuda S."/>
            <person name="Arancio O."/>
            <person name="D'Adamio L."/>
        </authorList>
    </citation>
    <scope>FUNCTION OF MBRI2 IN APP PROCESSING INHIBITION</scope>
    <scope>INTERACTION WITH APP AMYLOID-BETA A4 AND APP C99</scope>
</reference>
<reference key="24">
    <citation type="journal article" date="2012" name="J. Biol. Chem.">
        <title>The alpha-helical content of the transmembrane domain of the British dementia protein-2 (Bri2) determines its processing by signal peptide peptidase-like 2b (SPPL2b).</title>
        <authorList>
            <person name="Fluhrer R."/>
            <person name="Martin L."/>
            <person name="Klier B."/>
            <person name="Haug-Kroper M."/>
            <person name="Grammer G."/>
            <person name="Nuscher B."/>
            <person name="Haass C."/>
        </authorList>
    </citation>
    <scope>CLEAVAGE BY SPPL2A AND SPPL2B</scope>
    <scope>MUTAGENESIS OF GLY-60</scope>
</reference>
<name>ITM2B_HUMAN</name>
<feature type="chain" id="PRO_0000045840" description="Integral membrane protein 2B">
    <location>
        <begin position="1"/>
        <end position="266"/>
    </location>
</feature>
<feature type="chain" id="PRO_0000417464" description="BRI2, membrane form">
    <location>
        <begin position="1"/>
        <end position="243"/>
    </location>
</feature>
<feature type="chain" id="PRO_0000417465" description="BRI2 intracellular domain">
    <location>
        <begin position="1"/>
        <end status="unknown"/>
    </location>
</feature>
<feature type="chain" id="PRO_0000417466" description="BRI2C, soluble form">
    <location>
        <begin status="unknown"/>
        <end position="243"/>
    </location>
</feature>
<feature type="peptide" id="PRO_0000016545" description="Bri23 peptide">
    <location>
        <begin position="244"/>
        <end position="266"/>
    </location>
</feature>
<feature type="topological domain" description="Cytoplasmic" evidence="3">
    <location>
        <begin position="1"/>
        <end position="54"/>
    </location>
</feature>
<feature type="transmembrane region" description="Helical; Signal-anchor for type II membrane protein" evidence="3">
    <location>
        <begin position="55"/>
        <end position="75"/>
    </location>
</feature>
<feature type="topological domain" description="Lumenal" evidence="3">
    <location>
        <begin position="76"/>
        <end position="266"/>
    </location>
</feature>
<feature type="domain" description="BRICHOS" evidence="4">
    <location>
        <begin position="137"/>
        <end position="231"/>
    </location>
</feature>
<feature type="region of interest" description="Necessary for interaction with APP and inhibitor effects on APP processing">
    <location>
        <begin position="102"/>
        <end position="134"/>
    </location>
</feature>
<feature type="site" description="Cleavage; by furin">
    <location>
        <begin position="243"/>
        <end position="244"/>
    </location>
</feature>
<feature type="glycosylation site" description="N-linked (GlcNAc...) asparagine" evidence="19">
    <location>
        <position position="170"/>
    </location>
</feature>
<feature type="disulfide bond" description="Interchain">
    <location>
        <position position="89"/>
    </location>
</feature>
<feature type="disulfide bond" evidence="1">
    <location>
        <begin position="164"/>
        <end position="223"/>
    </location>
</feature>
<feature type="disulfide bond" description="Interchain (between ADan peptide variants)">
    <location>
        <begin position="248"/>
        <end position="265"/>
    </location>
</feature>
<feature type="splice variant" id="VSP_055326" description="In isoform 2." evidence="24">
    <location>
        <begin position="83"/>
        <end position="188"/>
    </location>
</feature>
<feature type="sequence variant" id="VAR_071047" description="In dbSNP:rs11556905." evidence="9 23">
    <original>A</original>
    <variation>T</variation>
    <location>
        <position position="15"/>
    </location>
</feature>
<feature type="sequence variant" id="VAR_072434" description="In RDGCA; dbSNP:rs606231283." evidence="22">
    <original>E</original>
    <variation>A</variation>
    <location>
        <position position="261"/>
    </location>
</feature>
<feature type="sequence variant" id="VAR_010240" description="In CAA-ITM2B2; amyloid ADan; colocalizes with APP amyloid-beta protein 42 in parenchymal and vascular lesions; interacts with APP amyloid-beta protein 42; oligomerizes and is subjected to disulfide bond formation; undergoes cyclic pyroglutamate formation on the N-terminus Gln residues and is further proteolytically cleaved in the cerebral cortex." evidence="7 8 12">
    <original>S</original>
    <variation>FNLFLNSQEKHY</variation>
    <location>
        <position position="266"/>
    </location>
</feature>
<feature type="sequence variant" id="VAR_010239" description="In CAA-ITM2B1; amyloid ABri." evidence="5 6 8">
    <original>S</original>
    <variation>SRTVKKNIIEEN</variation>
    <location>
        <position position="266"/>
    </location>
</feature>
<feature type="mutagenesis site" description="Strongly reduces intramembrane cleavage by SPPL2B." evidence="21">
    <original>G</original>
    <variation>V</variation>
    <location>
        <position position="60"/>
    </location>
</feature>
<feature type="mutagenesis site" description="Accumulates in intracellular compartments. Does not inhibit furin, ADAM10 and SPPL2A extracellular proteolytic processing activity." evidence="19">
    <original>N</original>
    <variation>A</variation>
    <location>
        <position position="170"/>
    </location>
</feature>
<feature type="mutagenesis site" description="Inhibits cleavage by furin. Does not prevent ADAM10 shedding." evidence="13 17">
    <original>RE</original>
    <variation>AA</variation>
    <location>
        <begin position="243"/>
        <end position="244"/>
    </location>
</feature>
<feature type="strand" evidence="25">
    <location>
        <begin position="118"/>
        <end position="122"/>
    </location>
</feature>
<feature type="turn" evidence="25">
    <location>
        <begin position="123"/>
        <end position="126"/>
    </location>
</feature>
<feature type="strand" evidence="25">
    <location>
        <begin position="127"/>
        <end position="132"/>
    </location>
</feature>
<feature type="strand" evidence="25">
    <location>
        <begin position="136"/>
        <end position="139"/>
    </location>
</feature>
<feature type="strand" evidence="25">
    <location>
        <begin position="143"/>
        <end position="148"/>
    </location>
</feature>
<feature type="turn" evidence="25">
    <location>
        <begin position="149"/>
        <end position="152"/>
    </location>
</feature>
<feature type="strand" evidence="25">
    <location>
        <begin position="153"/>
        <end position="156"/>
    </location>
</feature>
<feature type="turn" evidence="25">
    <location>
        <begin position="159"/>
        <end position="162"/>
    </location>
</feature>
<feature type="strand" evidence="25">
    <location>
        <begin position="164"/>
        <end position="168"/>
    </location>
</feature>
<feature type="helix" evidence="25">
    <location>
        <begin position="180"/>
        <end position="185"/>
    </location>
</feature>
<feature type="helix" evidence="25">
    <location>
        <begin position="217"/>
        <end position="222"/>
    </location>
</feature>
<feature type="strand" evidence="25">
    <location>
        <begin position="227"/>
        <end position="230"/>
    </location>
</feature>
<keyword id="KW-0002">3D-structure</keyword>
<keyword id="KW-0025">Alternative splicing</keyword>
<keyword id="KW-0034">Amyloid</keyword>
<keyword id="KW-1008">Amyloidosis</keyword>
<keyword id="KW-1003">Cell membrane</keyword>
<keyword id="KW-0165">Cleavage on pair of basic residues</keyword>
<keyword id="KW-0209">Deafness</keyword>
<keyword id="KW-0225">Disease variant</keyword>
<keyword id="KW-1015">Disulfide bond</keyword>
<keyword id="KW-0967">Endosome</keyword>
<keyword id="KW-0325">Glycoprotein</keyword>
<keyword id="KW-0333">Golgi apparatus</keyword>
<keyword id="KW-0472">Membrane</keyword>
<keyword id="KW-0523">Neurodegeneration</keyword>
<keyword id="KW-1267">Proteomics identification</keyword>
<keyword id="KW-1185">Reference proteome</keyword>
<keyword id="KW-0964">Secreted</keyword>
<keyword id="KW-0735">Signal-anchor</keyword>
<keyword id="KW-0812">Transmembrane</keyword>
<keyword id="KW-1133">Transmembrane helix</keyword>